<dbReference type="EMBL" id="L00094">
    <property type="protein sequence ID" value="AAA98779.1"/>
    <property type="molecule type" value="Genomic_DNA"/>
</dbReference>
<dbReference type="EMBL" id="L00091">
    <property type="protein sequence ID" value="AAA98779.1"/>
    <property type="status" value="JOINED"/>
    <property type="molecule type" value="Genomic_DNA"/>
</dbReference>
<dbReference type="EMBL" id="L00092">
    <property type="protein sequence ID" value="AAA98779.1"/>
    <property type="status" value="JOINED"/>
    <property type="molecule type" value="Genomic_DNA"/>
</dbReference>
<dbReference type="EMBL" id="L00093">
    <property type="protein sequence ID" value="AAA98779.1"/>
    <property type="status" value="JOINED"/>
    <property type="molecule type" value="Genomic_DNA"/>
</dbReference>
<dbReference type="EMBL" id="BC078741">
    <property type="protein sequence ID" value="AAH78741.1"/>
    <property type="molecule type" value="mRNA"/>
</dbReference>
<dbReference type="EMBL" id="BC087679">
    <property type="protein sequence ID" value="AAH87679.1"/>
    <property type="molecule type" value="mRNA"/>
</dbReference>
<dbReference type="PIR" id="A93945">
    <property type="entry name" value="ANRT"/>
</dbReference>
<dbReference type="RefSeq" id="NP_602308.1">
    <property type="nucleotide sequence ID" value="NM_134432.2"/>
</dbReference>
<dbReference type="RefSeq" id="XP_008770819.1">
    <property type="nucleotide sequence ID" value="XM_008772597.2"/>
</dbReference>
<dbReference type="PDB" id="1SMR">
    <property type="method" value="X-ray"/>
    <property type="resolution" value="2.00 A"/>
    <property type="chains" value="B/D/F/H=30-33"/>
</dbReference>
<dbReference type="PDB" id="2WXZ">
    <property type="method" value="X-ray"/>
    <property type="resolution" value="2.80 A"/>
    <property type="chains" value="A/C=25-477"/>
</dbReference>
<dbReference type="PDB" id="2WY1">
    <property type="method" value="X-ray"/>
    <property type="resolution" value="3.15 A"/>
    <property type="chains" value="A/B=25-477"/>
</dbReference>
<dbReference type="PDBsum" id="1SMR"/>
<dbReference type="PDBsum" id="2WXZ"/>
<dbReference type="PDBsum" id="2WY1"/>
<dbReference type="SMR" id="P01015"/>
<dbReference type="BioGRID" id="246369">
    <property type="interactions" value="1"/>
</dbReference>
<dbReference type="FunCoup" id="P01015">
    <property type="interactions" value="110"/>
</dbReference>
<dbReference type="STRING" id="10116.ENSRNOP00000024917"/>
<dbReference type="BindingDB" id="P01015"/>
<dbReference type="ChEMBL" id="CHEMBL5291508"/>
<dbReference type="MEROPS" id="I04.953"/>
<dbReference type="GlyCosmos" id="P01015">
    <property type="glycosylation" value="2 sites, No reported glycans"/>
</dbReference>
<dbReference type="GlyGen" id="P01015">
    <property type="glycosylation" value="2 sites"/>
</dbReference>
<dbReference type="iPTMnet" id="P01015"/>
<dbReference type="PhosphoSitePlus" id="P01015"/>
<dbReference type="SwissPalm" id="P01015"/>
<dbReference type="PaxDb" id="10116-ENSRNOP00000024917"/>
<dbReference type="GeneID" id="24179"/>
<dbReference type="KEGG" id="rno:24179"/>
<dbReference type="UCSC" id="RGD:2069">
    <property type="organism name" value="rat"/>
</dbReference>
<dbReference type="AGR" id="RGD:2069"/>
<dbReference type="CTD" id="183"/>
<dbReference type="RGD" id="2069">
    <property type="gene designation" value="Agt"/>
</dbReference>
<dbReference type="VEuPathDB" id="HostDB:ENSRNOG00000018445"/>
<dbReference type="eggNOG" id="KOG2392">
    <property type="taxonomic scope" value="Eukaryota"/>
</dbReference>
<dbReference type="HOGENOM" id="CLU_045267_1_0_1"/>
<dbReference type="InParanoid" id="P01015"/>
<dbReference type="PhylomeDB" id="P01015"/>
<dbReference type="TreeFam" id="TF343201"/>
<dbReference type="Reactome" id="R-RNO-2022377">
    <property type="pathway name" value="Metabolism of Angiotensinogen to Angiotensins"/>
</dbReference>
<dbReference type="Reactome" id="R-RNO-375276">
    <property type="pathway name" value="Peptide ligand-binding receptors"/>
</dbReference>
<dbReference type="Reactome" id="R-RNO-416476">
    <property type="pathway name" value="G alpha (q) signalling events"/>
</dbReference>
<dbReference type="Reactome" id="R-RNO-418594">
    <property type="pathway name" value="G alpha (i) signalling events"/>
</dbReference>
<dbReference type="EvolutionaryTrace" id="P01015"/>
<dbReference type="PRO" id="PR:P01015"/>
<dbReference type="Proteomes" id="UP000002494">
    <property type="component" value="Chromosome 19"/>
</dbReference>
<dbReference type="Bgee" id="ENSRNOG00000018445">
    <property type="expression patterns" value="Expressed in liver and 19 other cell types or tissues"/>
</dbReference>
<dbReference type="GO" id="GO:0005576">
    <property type="term" value="C:extracellular region"/>
    <property type="evidence" value="ECO:0000266"/>
    <property type="project" value="RGD"/>
</dbReference>
<dbReference type="GO" id="GO:0005615">
    <property type="term" value="C:extracellular space"/>
    <property type="evidence" value="ECO:0000314"/>
    <property type="project" value="BHF-UCL"/>
</dbReference>
<dbReference type="GO" id="GO:0008083">
    <property type="term" value="F:growth factor activity"/>
    <property type="evidence" value="ECO:0000266"/>
    <property type="project" value="RGD"/>
</dbReference>
<dbReference type="GO" id="GO:0005179">
    <property type="term" value="F:hormone activity"/>
    <property type="evidence" value="ECO:0000314"/>
    <property type="project" value="BHF-UCL"/>
</dbReference>
<dbReference type="GO" id="GO:0048018">
    <property type="term" value="F:receptor ligand activity"/>
    <property type="evidence" value="ECO:0000266"/>
    <property type="project" value="RGD"/>
</dbReference>
<dbReference type="GO" id="GO:0004867">
    <property type="term" value="F:serine-type endopeptidase inhibitor activity"/>
    <property type="evidence" value="ECO:0000318"/>
    <property type="project" value="GO_Central"/>
</dbReference>
<dbReference type="GO" id="GO:0031702">
    <property type="term" value="F:type 1 angiotensin receptor binding"/>
    <property type="evidence" value="ECO:0000266"/>
    <property type="project" value="RGD"/>
</dbReference>
<dbReference type="GO" id="GO:0031703">
    <property type="term" value="F:type 2 angiotensin receptor binding"/>
    <property type="evidence" value="ECO:0000266"/>
    <property type="project" value="RGD"/>
</dbReference>
<dbReference type="GO" id="GO:0007189">
    <property type="term" value="P:adenylate cyclase-activating G protein-coupled receptor signaling pathway"/>
    <property type="evidence" value="ECO:0000266"/>
    <property type="project" value="RGD"/>
</dbReference>
<dbReference type="GO" id="GO:0035932">
    <property type="term" value="P:aldosterone secretion"/>
    <property type="evidence" value="ECO:0000266"/>
    <property type="project" value="RGD"/>
</dbReference>
<dbReference type="GO" id="GO:0038166">
    <property type="term" value="P:angiotensin-activated signaling pathway"/>
    <property type="evidence" value="ECO:0000266"/>
    <property type="project" value="RGD"/>
</dbReference>
<dbReference type="GO" id="GO:0003051">
    <property type="term" value="P:angiotensin-mediated drinking behavior"/>
    <property type="evidence" value="ECO:0000314"/>
    <property type="project" value="RGD"/>
</dbReference>
<dbReference type="GO" id="GO:0001998">
    <property type="term" value="P:angiotensin-mediated vasoconstriction involved in regulation of systemic arterial blood pressure"/>
    <property type="evidence" value="ECO:0000266"/>
    <property type="project" value="RGD"/>
</dbReference>
<dbReference type="GO" id="GO:0002033">
    <property type="term" value="P:angiotensin-mediated vasodilation involved in regulation of systemic arterial blood pressure"/>
    <property type="evidence" value="ECO:0000266"/>
    <property type="project" value="RGD"/>
</dbReference>
<dbReference type="GO" id="GO:0014824">
    <property type="term" value="P:artery smooth muscle contraction"/>
    <property type="evidence" value="ECO:0000314"/>
    <property type="project" value="RGD"/>
</dbReference>
<dbReference type="GO" id="GO:0008306">
    <property type="term" value="P:associative learning"/>
    <property type="evidence" value="ECO:0000314"/>
    <property type="project" value="RGD"/>
</dbReference>
<dbReference type="GO" id="GO:0048143">
    <property type="term" value="P:astrocyte activation"/>
    <property type="evidence" value="ECO:0000266"/>
    <property type="project" value="RGD"/>
</dbReference>
<dbReference type="GO" id="GO:0001568">
    <property type="term" value="P:blood vessel development"/>
    <property type="evidence" value="ECO:0000266"/>
    <property type="project" value="RGD"/>
</dbReference>
<dbReference type="GO" id="GO:0002035">
    <property type="term" value="P:brain renin-angiotensin system"/>
    <property type="evidence" value="ECO:0000266"/>
    <property type="project" value="RGD"/>
</dbReference>
<dbReference type="GO" id="GO:0001658">
    <property type="term" value="P:branching involved in ureteric bud morphogenesis"/>
    <property type="evidence" value="ECO:0000266"/>
    <property type="project" value="RGD"/>
</dbReference>
<dbReference type="GO" id="GO:0061049">
    <property type="term" value="P:cell growth involved in cardiac muscle cell development"/>
    <property type="evidence" value="ECO:0000314"/>
    <property type="project" value="RGD"/>
</dbReference>
<dbReference type="GO" id="GO:0008283">
    <property type="term" value="P:cell population proliferation"/>
    <property type="evidence" value="ECO:0000266"/>
    <property type="project" value="RGD"/>
</dbReference>
<dbReference type="GO" id="GO:0007166">
    <property type="term" value="P:cell surface receptor signaling pathway"/>
    <property type="evidence" value="ECO:0000314"/>
    <property type="project" value="RGD"/>
</dbReference>
<dbReference type="GO" id="GO:0007160">
    <property type="term" value="P:cell-matrix adhesion"/>
    <property type="evidence" value="ECO:0000266"/>
    <property type="project" value="RGD"/>
</dbReference>
<dbReference type="GO" id="GO:1904385">
    <property type="term" value="P:cellular response to angiotensin"/>
    <property type="evidence" value="ECO:0000270"/>
    <property type="project" value="RGD"/>
</dbReference>
<dbReference type="GO" id="GO:0071260">
    <property type="term" value="P:cellular response to mechanical stimulus"/>
    <property type="evidence" value="ECO:0000270"/>
    <property type="project" value="RGD"/>
</dbReference>
<dbReference type="GO" id="GO:0042756">
    <property type="term" value="P:drinking behavior"/>
    <property type="evidence" value="ECO:0000266"/>
    <property type="project" value="RGD"/>
</dbReference>
<dbReference type="GO" id="GO:0070371">
    <property type="term" value="P:ERK1 and ERK2 cascade"/>
    <property type="evidence" value="ECO:0000314"/>
    <property type="project" value="RGD"/>
</dbReference>
<dbReference type="GO" id="GO:0008065">
    <property type="term" value="P:establishment of blood-nerve barrier"/>
    <property type="evidence" value="ECO:0000266"/>
    <property type="project" value="RGD"/>
</dbReference>
<dbReference type="GO" id="GO:0030198">
    <property type="term" value="P:extracellular matrix organization"/>
    <property type="evidence" value="ECO:0000266"/>
    <property type="project" value="RGD"/>
</dbReference>
<dbReference type="GO" id="GO:0007565">
    <property type="term" value="P:female pregnancy"/>
    <property type="evidence" value="ECO:0000270"/>
    <property type="project" value="RGD"/>
</dbReference>
<dbReference type="GO" id="GO:0048144">
    <property type="term" value="P:fibroblast proliferation"/>
    <property type="evidence" value="ECO:0000314"/>
    <property type="project" value="RGD"/>
</dbReference>
<dbReference type="GO" id="GO:0007186">
    <property type="term" value="P:G protein-coupled receptor signaling pathway"/>
    <property type="evidence" value="ECO:0000315"/>
    <property type="project" value="RGD"/>
</dbReference>
<dbReference type="GO" id="GO:0042445">
    <property type="term" value="P:hormone metabolic process"/>
    <property type="evidence" value="ECO:0000266"/>
    <property type="project" value="RGD"/>
</dbReference>
<dbReference type="GO" id="GO:0006883">
    <property type="term" value="P:intracellular sodium ion homeostasis"/>
    <property type="evidence" value="ECO:0000315"/>
    <property type="project" value="RGD"/>
</dbReference>
<dbReference type="GO" id="GO:0001822">
    <property type="term" value="P:kidney development"/>
    <property type="evidence" value="ECO:0000266"/>
    <property type="project" value="RGD"/>
</dbReference>
<dbReference type="GO" id="GO:0002034">
    <property type="term" value="P:maintenance of blood vessel diameter homeostasis by renin-angiotensin"/>
    <property type="evidence" value="ECO:0000266"/>
    <property type="project" value="RGD"/>
</dbReference>
<dbReference type="GO" id="GO:0000165">
    <property type="term" value="P:MAPK cascade"/>
    <property type="evidence" value="ECO:0000266"/>
    <property type="project" value="RGD"/>
</dbReference>
<dbReference type="GO" id="GO:0016525">
    <property type="term" value="P:negative regulation of angiogenesis"/>
    <property type="evidence" value="ECO:0000314"/>
    <property type="project" value="RGD"/>
</dbReference>
<dbReference type="GO" id="GO:0030308">
    <property type="term" value="P:negative regulation of cell growth"/>
    <property type="evidence" value="ECO:0000315"/>
    <property type="project" value="RGD"/>
</dbReference>
<dbReference type="GO" id="GO:0008285">
    <property type="term" value="P:negative regulation of cell population proliferation"/>
    <property type="evidence" value="ECO:0000266"/>
    <property type="project" value="RGD"/>
</dbReference>
<dbReference type="GO" id="GO:0043524">
    <property type="term" value="P:negative regulation of neuron apoptotic process"/>
    <property type="evidence" value="ECO:0000266"/>
    <property type="project" value="RGD"/>
</dbReference>
<dbReference type="GO" id="GO:0051387">
    <property type="term" value="P:negative regulation of neurotrophin TRK receptor signaling pathway"/>
    <property type="evidence" value="ECO:0000266"/>
    <property type="project" value="RGD"/>
</dbReference>
<dbReference type="GO" id="GO:0048662">
    <property type="term" value="P:negative regulation of smooth muscle cell proliferation"/>
    <property type="evidence" value="ECO:0000266"/>
    <property type="project" value="RGD"/>
</dbReference>
<dbReference type="GO" id="GO:0034104">
    <property type="term" value="P:negative regulation of tissue remodeling"/>
    <property type="evidence" value="ECO:0000314"/>
    <property type="project" value="RGD"/>
</dbReference>
<dbReference type="GO" id="GO:1904706">
    <property type="term" value="P:negative regulation of vascular associated smooth muscle cell proliferation"/>
    <property type="evidence" value="ECO:0000266"/>
    <property type="project" value="RGD"/>
</dbReference>
<dbReference type="GO" id="GO:0051402">
    <property type="term" value="P:neuron apoptotic process"/>
    <property type="evidence" value="ECO:0000266"/>
    <property type="project" value="RGD"/>
</dbReference>
<dbReference type="GO" id="GO:0035106">
    <property type="term" value="P:operant conditioning"/>
    <property type="evidence" value="ECO:0000314"/>
    <property type="project" value="RGD"/>
</dbReference>
<dbReference type="GO" id="GO:0035265">
    <property type="term" value="P:organ growth"/>
    <property type="evidence" value="ECO:0000266"/>
    <property type="project" value="RGD"/>
</dbReference>
<dbReference type="GO" id="GO:0001543">
    <property type="term" value="P:ovarian follicle rupture"/>
    <property type="evidence" value="ECO:0000266"/>
    <property type="project" value="RGD"/>
</dbReference>
<dbReference type="GO" id="GO:0030432">
    <property type="term" value="P:peristalsis"/>
    <property type="evidence" value="ECO:0000266"/>
    <property type="project" value="RGD"/>
</dbReference>
<dbReference type="GO" id="GO:0045777">
    <property type="term" value="P:positive regulation of blood pressure"/>
    <property type="evidence" value="ECO:0000314"/>
    <property type="project" value="RGD"/>
</dbReference>
<dbReference type="GO" id="GO:0090190">
    <property type="term" value="P:positive regulation of branching involved in ureteric bud morphogenesis"/>
    <property type="evidence" value="ECO:0000266"/>
    <property type="project" value="RGD"/>
</dbReference>
<dbReference type="GO" id="GO:0043123">
    <property type="term" value="P:positive regulation of canonical NF-kappaB signal transduction"/>
    <property type="evidence" value="ECO:0000266"/>
    <property type="project" value="RGD"/>
</dbReference>
<dbReference type="GO" id="GO:0010666">
    <property type="term" value="P:positive regulation of cardiac muscle cell apoptotic process"/>
    <property type="evidence" value="ECO:0000314"/>
    <property type="project" value="RGD"/>
</dbReference>
<dbReference type="GO" id="GO:0010613">
    <property type="term" value="P:positive regulation of cardiac muscle hypertrophy"/>
    <property type="evidence" value="ECO:0000314"/>
    <property type="project" value="BHF-UCL"/>
</dbReference>
<dbReference type="GO" id="GO:0008284">
    <property type="term" value="P:positive regulation of cell population proliferation"/>
    <property type="evidence" value="ECO:0000314"/>
    <property type="project" value="RGD"/>
</dbReference>
<dbReference type="GO" id="GO:0001819">
    <property type="term" value="P:positive regulation of cytokine production"/>
    <property type="evidence" value="ECO:0000266"/>
    <property type="project" value="RGD"/>
</dbReference>
<dbReference type="GO" id="GO:0007204">
    <property type="term" value="P:positive regulation of cytosolic calcium ion concentration"/>
    <property type="evidence" value="ECO:0000314"/>
    <property type="project" value="RGD"/>
</dbReference>
<dbReference type="GO" id="GO:0045893">
    <property type="term" value="P:positive regulation of DNA-templated transcription"/>
    <property type="evidence" value="ECO:0000266"/>
    <property type="project" value="RGD"/>
</dbReference>
<dbReference type="GO" id="GO:0010595">
    <property type="term" value="P:positive regulation of endothelial cell migration"/>
    <property type="evidence" value="ECO:0000266"/>
    <property type="project" value="RGD"/>
</dbReference>
<dbReference type="GO" id="GO:0045742">
    <property type="term" value="P:positive regulation of epidermal growth factor receptor signaling pathway"/>
    <property type="evidence" value="ECO:0000266"/>
    <property type="project" value="RGD"/>
</dbReference>
<dbReference type="GO" id="GO:0010718">
    <property type="term" value="P:positive regulation of epithelial to mesenchymal transition"/>
    <property type="evidence" value="ECO:0000250"/>
    <property type="project" value="UniProtKB"/>
</dbReference>
<dbReference type="GO" id="GO:1901203">
    <property type="term" value="P:positive regulation of extracellular matrix assembly"/>
    <property type="evidence" value="ECO:0000266"/>
    <property type="project" value="RGD"/>
</dbReference>
<dbReference type="GO" id="GO:0003331">
    <property type="term" value="P:positive regulation of extracellular matrix constituent secretion"/>
    <property type="evidence" value="ECO:0000314"/>
    <property type="project" value="RGD"/>
</dbReference>
<dbReference type="GO" id="GO:2001238">
    <property type="term" value="P:positive regulation of extrinsic apoptotic signaling pathway"/>
    <property type="evidence" value="ECO:0000266"/>
    <property type="project" value="RGD"/>
</dbReference>
<dbReference type="GO" id="GO:0045723">
    <property type="term" value="P:positive regulation of fatty acid biosynthetic process"/>
    <property type="evidence" value="ECO:0000266"/>
    <property type="project" value="RGD"/>
</dbReference>
<dbReference type="GO" id="GO:0048146">
    <property type="term" value="P:positive regulation of fibroblast proliferation"/>
    <property type="evidence" value="ECO:0000314"/>
    <property type="project" value="BHF-UCL"/>
</dbReference>
<dbReference type="GO" id="GO:1903598">
    <property type="term" value="P:positive regulation of gap junction assembly"/>
    <property type="evidence" value="ECO:0000266"/>
    <property type="project" value="RGD"/>
</dbReference>
<dbReference type="GO" id="GO:0010628">
    <property type="term" value="P:positive regulation of gene expression"/>
    <property type="evidence" value="ECO:0000266"/>
    <property type="project" value="RGD"/>
</dbReference>
<dbReference type="GO" id="GO:0046628">
    <property type="term" value="P:positive regulation of insulin receptor signaling pathway"/>
    <property type="evidence" value="ECO:0000314"/>
    <property type="project" value="RGD"/>
</dbReference>
<dbReference type="GO" id="GO:0035774">
    <property type="term" value="P:positive regulation of insulin secretion involved in cellular response to glucose stimulus"/>
    <property type="evidence" value="ECO:0000266"/>
    <property type="project" value="RGD"/>
</dbReference>
<dbReference type="GO" id="GO:1905589">
    <property type="term" value="P:positive regulation of L-arginine import across plasma membrane"/>
    <property type="evidence" value="ECO:0000314"/>
    <property type="project" value="RGD"/>
</dbReference>
<dbReference type="GO" id="GO:1905010">
    <property type="term" value="P:positive regulation of L-lysine import across plasma membrane"/>
    <property type="evidence" value="ECO:0000314"/>
    <property type="project" value="RGD"/>
</dbReference>
<dbReference type="GO" id="GO:0010744">
    <property type="term" value="P:positive regulation of macrophage derived foam cell differentiation"/>
    <property type="evidence" value="ECO:0000266"/>
    <property type="project" value="RGD"/>
</dbReference>
<dbReference type="GO" id="GO:0043410">
    <property type="term" value="P:positive regulation of MAPK cascade"/>
    <property type="evidence" value="ECO:0000266"/>
    <property type="project" value="RGD"/>
</dbReference>
<dbReference type="GO" id="GO:1902895">
    <property type="term" value="P:positive regulation of miRNA transcription"/>
    <property type="evidence" value="ECO:0000266"/>
    <property type="project" value="RGD"/>
</dbReference>
<dbReference type="GO" id="GO:0040018">
    <property type="term" value="P:positive regulation of multicellular organism growth"/>
    <property type="evidence" value="ECO:0000266"/>
    <property type="project" value="RGD"/>
</dbReference>
<dbReference type="GO" id="GO:0010976">
    <property type="term" value="P:positive regulation of neuron projection development"/>
    <property type="evidence" value="ECO:0000315"/>
    <property type="project" value="RGD"/>
</dbReference>
<dbReference type="GO" id="GO:0045429">
    <property type="term" value="P:positive regulation of nitric oxide biosynthetic process"/>
    <property type="evidence" value="ECO:0000314"/>
    <property type="project" value="RGD"/>
</dbReference>
<dbReference type="GO" id="GO:0010701">
    <property type="term" value="P:positive regulation of norepinephrine secretion"/>
    <property type="evidence" value="ECO:0000314"/>
    <property type="project" value="RGD"/>
</dbReference>
<dbReference type="GO" id="GO:0046622">
    <property type="term" value="P:positive regulation of organ growth"/>
    <property type="evidence" value="ECO:0000266"/>
    <property type="project" value="RGD"/>
</dbReference>
<dbReference type="GO" id="GO:0051897">
    <property type="term" value="P:positive regulation of phosphatidylinositol 3-kinase/protein kinase B signal transduction"/>
    <property type="evidence" value="ECO:0000266"/>
    <property type="project" value="RGD"/>
</dbReference>
<dbReference type="GO" id="GO:0051247">
    <property type="term" value="P:positive regulation of protein metabolic process"/>
    <property type="evidence" value="ECO:0000266"/>
    <property type="project" value="RGD"/>
</dbReference>
<dbReference type="GO" id="GO:0032930">
    <property type="term" value="P:positive regulation of superoxide anion generation"/>
    <property type="evidence" value="ECO:0000314"/>
    <property type="project" value="RGD"/>
</dbReference>
<dbReference type="GO" id="GO:1904754">
    <property type="term" value="P:positive regulation of vascular associated smooth muscle cell migration"/>
    <property type="evidence" value="ECO:0000314"/>
    <property type="project" value="RGD"/>
</dbReference>
<dbReference type="GO" id="GO:1904707">
    <property type="term" value="P:positive regulation of vascular associated smooth muscle cell proliferation"/>
    <property type="evidence" value="ECO:0000314"/>
    <property type="project" value="RGD"/>
</dbReference>
<dbReference type="GO" id="GO:0006606">
    <property type="term" value="P:protein import into nucleus"/>
    <property type="evidence" value="ECO:0000314"/>
    <property type="project" value="RGD"/>
</dbReference>
<dbReference type="GO" id="GO:0042981">
    <property type="term" value="P:regulation of apoptotic process"/>
    <property type="evidence" value="ECO:0000314"/>
    <property type="project" value="RGD"/>
</dbReference>
<dbReference type="GO" id="GO:0008217">
    <property type="term" value="P:regulation of blood pressure"/>
    <property type="evidence" value="ECO:0000266"/>
    <property type="project" value="RGD"/>
</dbReference>
<dbReference type="GO" id="GO:0051924">
    <property type="term" value="P:regulation of calcium ion transport"/>
    <property type="evidence" value="ECO:0000314"/>
    <property type="project" value="RGD"/>
</dbReference>
<dbReference type="GO" id="GO:1903779">
    <property type="term" value="P:regulation of cardiac conduction"/>
    <property type="evidence" value="ECO:0000266"/>
    <property type="project" value="RGD"/>
</dbReference>
<dbReference type="GO" id="GO:1901201">
    <property type="term" value="P:regulation of extracellular matrix assembly"/>
    <property type="evidence" value="ECO:0000266"/>
    <property type="project" value="RGD"/>
</dbReference>
<dbReference type="GO" id="GO:0010468">
    <property type="term" value="P:regulation of gene expression"/>
    <property type="evidence" value="ECO:0000266"/>
    <property type="project" value="RGD"/>
</dbReference>
<dbReference type="GO" id="GO:0002027">
    <property type="term" value="P:regulation of heart rate"/>
    <property type="evidence" value="ECO:0000314"/>
    <property type="project" value="RGD"/>
</dbReference>
<dbReference type="GO" id="GO:0050727">
    <property type="term" value="P:regulation of inflammatory response"/>
    <property type="evidence" value="ECO:0000266"/>
    <property type="project" value="RGD"/>
</dbReference>
<dbReference type="GO" id="GO:0048169">
    <property type="term" value="P:regulation of long-term neuronal synaptic plasticity"/>
    <property type="evidence" value="ECO:0000315"/>
    <property type="project" value="RGD"/>
</dbReference>
<dbReference type="GO" id="GO:0002019">
    <property type="term" value="P:regulation of renal output by angiotensin"/>
    <property type="evidence" value="ECO:0000266"/>
    <property type="project" value="RGD"/>
</dbReference>
<dbReference type="GO" id="GO:0001991">
    <property type="term" value="P:regulation of systemic arterial blood pressure by circulatory renin-angiotensin"/>
    <property type="evidence" value="ECO:0000266"/>
    <property type="project" value="RGD"/>
</dbReference>
<dbReference type="GO" id="GO:0051969">
    <property type="term" value="P:regulation of transmission of nerve impulse"/>
    <property type="evidence" value="ECO:0000314"/>
    <property type="project" value="RGD"/>
</dbReference>
<dbReference type="GO" id="GO:0001999">
    <property type="term" value="P:renal response to blood flow involved in circulatory renin-angiotensin regulation of systemic arterial blood pressure"/>
    <property type="evidence" value="ECO:0000266"/>
    <property type="project" value="RGD"/>
</dbReference>
<dbReference type="GO" id="GO:0003014">
    <property type="term" value="P:renal system process"/>
    <property type="evidence" value="ECO:0000266"/>
    <property type="project" value="RGD"/>
</dbReference>
<dbReference type="GO" id="GO:0002018">
    <property type="term" value="P:renin-angiotensin regulation of aldosterone production"/>
    <property type="evidence" value="ECO:0000314"/>
    <property type="project" value="RGD"/>
</dbReference>
<dbReference type="GO" id="GO:1990776">
    <property type="term" value="P:response to angiotensin"/>
    <property type="evidence" value="ECO:0000266"/>
    <property type="project" value="RGD"/>
</dbReference>
<dbReference type="GO" id="GO:0009409">
    <property type="term" value="P:response to cold"/>
    <property type="evidence" value="ECO:0000266"/>
    <property type="project" value="RGD"/>
</dbReference>
<dbReference type="GO" id="GO:0032355">
    <property type="term" value="P:response to estradiol"/>
    <property type="evidence" value="ECO:0000270"/>
    <property type="project" value="RGD"/>
</dbReference>
<dbReference type="GO" id="GO:0009612">
    <property type="term" value="P:response to mechanical stimulus"/>
    <property type="evidence" value="ECO:0000270"/>
    <property type="project" value="RGD"/>
</dbReference>
<dbReference type="GO" id="GO:0014873">
    <property type="term" value="P:response to muscle activity involved in regulation of muscle adaptation"/>
    <property type="evidence" value="ECO:0000315"/>
    <property type="project" value="BHF-UCL"/>
</dbReference>
<dbReference type="GO" id="GO:0009651">
    <property type="term" value="P:response to salt stress"/>
    <property type="evidence" value="ECO:0000266"/>
    <property type="project" value="RGD"/>
</dbReference>
<dbReference type="GO" id="GO:0051145">
    <property type="term" value="P:smooth muscle cell differentiation"/>
    <property type="evidence" value="ECO:0000266"/>
    <property type="project" value="RGD"/>
</dbReference>
<dbReference type="GO" id="GO:0048659">
    <property type="term" value="P:smooth muscle cell proliferation"/>
    <property type="evidence" value="ECO:0000314"/>
    <property type="project" value="RGD"/>
</dbReference>
<dbReference type="GO" id="GO:0051403">
    <property type="term" value="P:stress-activated MAPK cascade"/>
    <property type="evidence" value="ECO:0000314"/>
    <property type="project" value="RGD"/>
</dbReference>
<dbReference type="GO" id="GO:0070471">
    <property type="term" value="P:uterine smooth muscle contraction"/>
    <property type="evidence" value="ECO:0000314"/>
    <property type="project" value="RGD"/>
</dbReference>
<dbReference type="GO" id="GO:1990874">
    <property type="term" value="P:vascular associated smooth muscle cell proliferation"/>
    <property type="evidence" value="ECO:0000266"/>
    <property type="project" value="RGD"/>
</dbReference>
<dbReference type="GO" id="GO:0042310">
    <property type="term" value="P:vasoconstriction"/>
    <property type="evidence" value="ECO:0000314"/>
    <property type="project" value="RGD"/>
</dbReference>
<dbReference type="GO" id="GO:0042311">
    <property type="term" value="P:vasodilation"/>
    <property type="evidence" value="ECO:0000314"/>
    <property type="project" value="RGD"/>
</dbReference>
<dbReference type="GO" id="GO:0030103">
    <property type="term" value="P:vasopressin secretion"/>
    <property type="evidence" value="ECO:0000266"/>
    <property type="project" value="RGD"/>
</dbReference>
<dbReference type="CDD" id="cd02054">
    <property type="entry name" value="serpinA8_AGT"/>
    <property type="match status" value="1"/>
</dbReference>
<dbReference type="Gene3D" id="2.30.39.10">
    <property type="entry name" value="Alpha-1-antitrypsin, domain 1"/>
    <property type="match status" value="1"/>
</dbReference>
<dbReference type="Gene3D" id="3.30.497.10">
    <property type="entry name" value="Antithrombin, subunit I, domain 2"/>
    <property type="match status" value="1"/>
</dbReference>
<dbReference type="InterPro" id="IPR000227">
    <property type="entry name" value="Angiotensinogen"/>
</dbReference>
<dbReference type="InterPro" id="IPR033834">
    <property type="entry name" value="Angiotensinogen_serpin_dom"/>
</dbReference>
<dbReference type="InterPro" id="IPR023796">
    <property type="entry name" value="Serpin_dom"/>
</dbReference>
<dbReference type="InterPro" id="IPR000215">
    <property type="entry name" value="Serpin_fam"/>
</dbReference>
<dbReference type="InterPro" id="IPR036186">
    <property type="entry name" value="Serpin_sf"/>
</dbReference>
<dbReference type="InterPro" id="IPR042178">
    <property type="entry name" value="Serpin_sf_1"/>
</dbReference>
<dbReference type="InterPro" id="IPR042185">
    <property type="entry name" value="Serpin_sf_2"/>
</dbReference>
<dbReference type="PANTHER" id="PTHR11461:SF13">
    <property type="entry name" value="ANGIOTENSINOGEN"/>
    <property type="match status" value="1"/>
</dbReference>
<dbReference type="PANTHER" id="PTHR11461">
    <property type="entry name" value="SERINE PROTEASE INHIBITOR, SERPIN"/>
    <property type="match status" value="1"/>
</dbReference>
<dbReference type="Pfam" id="PF00079">
    <property type="entry name" value="Serpin"/>
    <property type="match status" value="1"/>
</dbReference>
<dbReference type="PRINTS" id="PR00654">
    <property type="entry name" value="ANGIOTENSNGN"/>
</dbReference>
<dbReference type="SMART" id="SM00093">
    <property type="entry name" value="SERPIN"/>
    <property type="match status" value="1"/>
</dbReference>
<dbReference type="SUPFAM" id="SSF56574">
    <property type="entry name" value="Serpins"/>
    <property type="match status" value="1"/>
</dbReference>
<comment type="function">
    <text evidence="1">Essential component of the renin-angiotensin system (RAS), a potent regulator of blood pressure, body fluid and electrolyte homeostasis.</text>
</comment>
<comment type="function">
    <molecule>Angiotensin-2</molecule>
    <text evidence="1 7">Acts directly on vascular smooth muscle as a potent vasoconstrictor, affects cardiac contractility and heart rate through its action on the sympathetic nervous system, and alters renal sodium and water absorption through its ability to stimulate the zona glomerulosa cells of the adrenal cortex to synthesize and secrete aldosterone. Acts by binding to angiotensin receptors AGTR1 and AGTR2 (By similarity). Also binds the DEAR/FBXW7-AS1 receptor (PubMed:9508787).</text>
</comment>
<comment type="function">
    <molecule>Angiotensin-3</molecule>
    <text evidence="1">Stimulates aldosterone release.</text>
</comment>
<comment type="function">
    <molecule>Angiotensin 1-7</molecule>
    <text evidence="2 4">Is a ligand for the G-protein coupled receptor MAS1 (By similarity). Has vasodilator and antidiuretic effects (By similarity). Has an antithrombotic effect that involves MAS1-mediated release of nitric oxide from platelets (PubMed:18026570).</text>
</comment>
<comment type="subcellular location">
    <subcellularLocation>
        <location evidence="9">Secreted</location>
    </subcellularLocation>
</comment>
<comment type="PTM">
    <text evidence="1">In response to low blood pressure, the enzyme renin/REN cleaves angiotensinogen to produce angiotensin-1. Angiotensin-1 is a substrate of ACE (angiotensin converting enzyme) that removes a dipeptide to yield the physiologically active peptide angiotensin-2. Angiotensin-1 and angiotensin-2 can be further processed to generate angiotensin-3, angiotensin-4. Angiotensin 1-9 is cleaved from angiotensin-1 by ACE2 and can be further processed by ACE to produce angiotensin 1-7, angiotensin 1-5 and angiotensin 1-4. Angiotensin 1-7 has also been proposed to be cleaved from angiotensin-2 by ACE2 or from angiotensin-1 by MME (neprilysin) (By similarity).</text>
</comment>
<comment type="PTM">
    <text evidence="5">The disulfide bond is labile. Angiotensinogen is present in the circulation in a near 40:60 ratio with the oxidized disulfide-bonded form, which preferentially interacts with receptor-bound renin.</text>
</comment>
<comment type="similarity">
    <text evidence="8">Belongs to the serpin family.</text>
</comment>
<protein>
    <recommendedName>
        <fullName>Angiotensinogen</fullName>
    </recommendedName>
    <alternativeName>
        <fullName>Serpin A8</fullName>
    </alternativeName>
    <component>
        <recommendedName>
            <fullName>Angiotensin-1</fullName>
        </recommendedName>
        <alternativeName>
            <fullName>Angiotensin 1-10</fullName>
        </alternativeName>
        <alternativeName>
            <fullName>Angiotensin I</fullName>
            <shortName>Ang I</shortName>
        </alternativeName>
    </component>
    <component>
        <recommendedName>
            <fullName>Angiotensin-2</fullName>
        </recommendedName>
        <alternativeName>
            <fullName>Angiotensin 1-8</fullName>
        </alternativeName>
        <alternativeName>
            <fullName>Angiotensin II</fullName>
            <shortName>Ang II</shortName>
        </alternativeName>
    </component>
    <component>
        <recommendedName>
            <fullName>Angiotensin-3</fullName>
        </recommendedName>
        <alternativeName>
            <fullName>Angiotensin 2-8</fullName>
        </alternativeName>
        <alternativeName>
            <fullName>Angiotensin III</fullName>
            <shortName>Ang III</shortName>
        </alternativeName>
        <alternativeName>
            <fullName>Des-Asp[1]-angiotensin II</fullName>
        </alternativeName>
    </component>
    <component>
        <recommendedName>
            <fullName>Angiotensin-4</fullName>
        </recommendedName>
        <alternativeName>
            <fullName>Angiotensin 3-8</fullName>
        </alternativeName>
        <alternativeName>
            <fullName>Angiotensin IV</fullName>
            <shortName>Ang IV</shortName>
        </alternativeName>
    </component>
    <component>
        <recommendedName>
            <fullName>Angiotensin 1-9</fullName>
        </recommendedName>
    </component>
    <component>
        <recommendedName>
            <fullName>Angiotensin 1-7</fullName>
        </recommendedName>
    </component>
    <component>
        <recommendedName>
            <fullName>Angiotensin 1-5</fullName>
        </recommendedName>
    </component>
    <component>
        <recommendedName>
            <fullName>Angiotensin 1-4</fullName>
        </recommendedName>
    </component>
</protein>
<proteinExistence type="evidence at protein level"/>
<organism>
    <name type="scientific">Rattus norvegicus</name>
    <name type="common">Rat</name>
    <dbReference type="NCBI Taxonomy" id="10116"/>
    <lineage>
        <taxon>Eukaryota</taxon>
        <taxon>Metazoa</taxon>
        <taxon>Chordata</taxon>
        <taxon>Craniata</taxon>
        <taxon>Vertebrata</taxon>
        <taxon>Euteleostomi</taxon>
        <taxon>Mammalia</taxon>
        <taxon>Eutheria</taxon>
        <taxon>Euarchontoglires</taxon>
        <taxon>Glires</taxon>
        <taxon>Rodentia</taxon>
        <taxon>Myomorpha</taxon>
        <taxon>Muroidea</taxon>
        <taxon>Muridae</taxon>
        <taxon>Murinae</taxon>
        <taxon>Rattus</taxon>
    </lineage>
</organism>
<sequence length="477" mass="51982">MTPTGAGLKATIFCILTWVSLTAGDRVYIHPFHLLYYSKSTCAQLENPSVETLPEPTFEPVPIQAKTSPVDEKTLRDKLVLATEKLEAEDRQRAAQVAMIANFMGFRMYKMLSEARGVASGAVLSPPALFGTLVSFYLGSLDPTASQLQVLLGVPVKEGDCTSRLDGHKVLTALQAVQGLLVTQGGSSSQTPLLQSTVVGLFTAPGLRLKQPFVESLGPFTPAIFPRSLDLSTDPVLAAQKINRFVQAVTGWKMNLPLEGVSTDSTLFFNTYVHFQGKMRGFSQLTGLHEFWVDNSTSVSVPMLSGTGNFQHWSDAQNNFSVTRVPLGESVTLLLIQPQCASDLDRVEVLVFQHDFLTWIKNPPPRAIRLTLPQLEIRGSYNLQDLLAQAKLSTLLGAEANLGKMGDTNPRVGEVLNSILLELQAGEEEQPTESAQQPGSPEVLDVTLSSPFLFAIYERDSGALHFLGRVDNPQNVV</sequence>
<name>ANGT_RAT</name>
<accession>P01015</accession>
<feature type="signal peptide" evidence="6">
    <location>
        <begin position="1"/>
        <end position="24"/>
    </location>
</feature>
<feature type="chain" id="PRO_0000032468" description="Angiotensinogen">
    <location>
        <begin position="25"/>
        <end position="477"/>
    </location>
</feature>
<feature type="peptide" id="PRO_0000032469" description="Angiotensin-1" evidence="6">
    <location>
        <begin position="25"/>
        <end position="34"/>
    </location>
</feature>
<feature type="peptide" id="PRO_0000420674" description="Angiotensin 1-9" evidence="1">
    <location>
        <begin position="25"/>
        <end position="33"/>
    </location>
</feature>
<feature type="peptide" id="PRO_0000032470" description="Angiotensin-2" evidence="1">
    <location>
        <begin position="25"/>
        <end position="32"/>
    </location>
</feature>
<feature type="peptide" id="PRO_0000420675" description="Angiotensin 1-7" evidence="1">
    <location>
        <begin position="25"/>
        <end position="31"/>
    </location>
</feature>
<feature type="peptide" id="PRO_0000420676" description="Angiotensin 1-5" evidence="1">
    <location>
        <begin position="25"/>
        <end position="29"/>
    </location>
</feature>
<feature type="peptide" id="PRO_0000420677" description="Angiotensin 1-4" evidence="1">
    <location>
        <begin position="25"/>
        <end position="28"/>
    </location>
</feature>
<feature type="peptide" id="PRO_0000032471" description="Angiotensin-3" evidence="1">
    <location>
        <begin position="26"/>
        <end position="32"/>
    </location>
</feature>
<feature type="peptide" id="PRO_0000420678" description="Angiotensin-4" evidence="1">
    <location>
        <begin position="27"/>
        <end position="32"/>
    </location>
</feature>
<feature type="glycosylation site" description="N-linked (GlcNAc...) asparagine" evidence="3">
    <location>
        <position position="295"/>
    </location>
</feature>
<feature type="glycosylation site" description="N-linked (GlcNAc...) asparagine" evidence="3">
    <location>
        <position position="319"/>
    </location>
</feature>
<feature type="disulfide bond" evidence="5">
    <location>
        <begin position="42"/>
        <end position="161"/>
    </location>
</feature>
<feature type="turn" evidence="10">
    <location>
        <begin position="33"/>
        <end position="35"/>
    </location>
</feature>
<feature type="helix" evidence="10">
    <location>
        <begin position="39"/>
        <end position="43"/>
    </location>
</feature>
<feature type="helix" evidence="10">
    <location>
        <begin position="72"/>
        <end position="84"/>
    </location>
</feature>
<feature type="helix" evidence="10">
    <location>
        <begin position="88"/>
        <end position="115"/>
    </location>
</feature>
<feature type="strand" evidence="10">
    <location>
        <begin position="120"/>
        <end position="124"/>
    </location>
</feature>
<feature type="helix" evidence="10">
    <location>
        <begin position="126"/>
        <end position="138"/>
    </location>
</feature>
<feature type="helix" evidence="10">
    <location>
        <begin position="142"/>
        <end position="151"/>
    </location>
</feature>
<feature type="helix" evidence="10">
    <location>
        <begin position="167"/>
        <end position="181"/>
    </location>
</feature>
<feature type="strand" evidence="10">
    <location>
        <begin position="193"/>
        <end position="203"/>
    </location>
</feature>
<feature type="helix" evidence="10">
    <location>
        <begin position="211"/>
        <end position="216"/>
    </location>
</feature>
<feature type="turn" evidence="10">
    <location>
        <begin position="217"/>
        <end position="220"/>
    </location>
</feature>
<feature type="strand" evidence="10">
    <location>
        <begin position="224"/>
        <end position="228"/>
    </location>
</feature>
<feature type="strand" evidence="10">
    <location>
        <begin position="231"/>
        <end position="233"/>
    </location>
</feature>
<feature type="helix" evidence="10">
    <location>
        <begin position="235"/>
        <end position="250"/>
    </location>
</feature>
<feature type="strand" evidence="10">
    <location>
        <begin position="267"/>
        <end position="279"/>
    </location>
</feature>
<feature type="strand" evidence="11">
    <location>
        <begin position="282"/>
        <end position="284"/>
    </location>
</feature>
<feature type="strand" evidence="10">
    <location>
        <begin position="289"/>
        <end position="294"/>
    </location>
</feature>
<feature type="strand" evidence="10">
    <location>
        <begin position="297"/>
        <end position="301"/>
    </location>
</feature>
<feature type="strand" evidence="10">
    <location>
        <begin position="303"/>
        <end position="315"/>
    </location>
</feature>
<feature type="turn" evidence="10">
    <location>
        <begin position="316"/>
        <end position="319"/>
    </location>
</feature>
<feature type="strand" evidence="10">
    <location>
        <begin position="320"/>
        <end position="340"/>
    </location>
</feature>
<feature type="helix" evidence="10">
    <location>
        <begin position="341"/>
        <end position="343"/>
    </location>
</feature>
<feature type="helix" evidence="10">
    <location>
        <begin position="344"/>
        <end position="351"/>
    </location>
</feature>
<feature type="strand" evidence="10">
    <location>
        <begin position="353"/>
        <end position="355"/>
    </location>
</feature>
<feature type="strand" evidence="10">
    <location>
        <begin position="366"/>
        <end position="373"/>
    </location>
</feature>
<feature type="strand" evidence="10">
    <location>
        <begin position="375"/>
        <end position="382"/>
    </location>
</feature>
<feature type="helix" evidence="10">
    <location>
        <begin position="383"/>
        <end position="389"/>
    </location>
</feature>
<feature type="turn" evidence="10">
    <location>
        <begin position="393"/>
        <end position="396"/>
    </location>
</feature>
<feature type="helix" evidence="10">
    <location>
        <begin position="403"/>
        <end position="405"/>
    </location>
</feature>
<feature type="strand" evidence="10">
    <location>
        <begin position="406"/>
        <end position="408"/>
    </location>
</feature>
<feature type="strand" evidence="10">
    <location>
        <begin position="416"/>
        <end position="425"/>
    </location>
</feature>
<feature type="strand" evidence="10">
    <location>
        <begin position="452"/>
        <end position="458"/>
    </location>
</feature>
<feature type="turn" evidence="10">
    <location>
        <begin position="459"/>
        <end position="462"/>
    </location>
</feature>
<feature type="strand" evidence="10">
    <location>
        <begin position="463"/>
        <end position="471"/>
    </location>
</feature>
<evidence type="ECO:0000250" key="1">
    <source>
        <dbReference type="UniProtKB" id="P01019"/>
    </source>
</evidence>
<evidence type="ECO:0000250" key="2">
    <source>
        <dbReference type="UniProtKB" id="P11859"/>
    </source>
</evidence>
<evidence type="ECO:0000255" key="3"/>
<evidence type="ECO:0000269" key="4">
    <source>
    </source>
</evidence>
<evidence type="ECO:0000269" key="5">
    <source>
    </source>
</evidence>
<evidence type="ECO:0000269" key="6">
    <source>
    </source>
</evidence>
<evidence type="ECO:0000269" key="7">
    <source>
    </source>
</evidence>
<evidence type="ECO:0000305" key="8"/>
<evidence type="ECO:0000305" key="9">
    <source>
    </source>
</evidence>
<evidence type="ECO:0007829" key="10">
    <source>
        <dbReference type="PDB" id="2WXZ"/>
    </source>
</evidence>
<evidence type="ECO:0007829" key="11">
    <source>
        <dbReference type="PDB" id="2WY1"/>
    </source>
</evidence>
<reference key="1">
    <citation type="journal article" date="1983" name="Proc. Natl. Acad. Sci. U.S.A.">
        <title>Cloning and sequence analysis of cDNA for rat angiotensinogen.</title>
        <authorList>
            <person name="Ohkubo H."/>
            <person name="Kageyama R."/>
            <person name="Ujihara M."/>
            <person name="Hirose T."/>
            <person name="Inayama S."/>
            <person name="Nakanishi S."/>
        </authorList>
    </citation>
    <scope>NUCLEOTIDE SEQUENCE [MRNA]</scope>
    <source>
        <strain>Wistar</strain>
    </source>
</reference>
<reference key="2">
    <citation type="journal article" date="1984" name="J. Biol. Chem.">
        <title>Common structural organization of the angiotensinogen and the alpha 1-antitrypsin genes.</title>
        <authorList>
            <person name="Tanaka T."/>
            <person name="Ohkubo H."/>
            <person name="Nakanishi S."/>
        </authorList>
    </citation>
    <scope>NUCLEOTIDE SEQUENCE [GENOMIC DNA]</scope>
</reference>
<reference key="3">
    <citation type="journal article" date="2004" name="Genome Res.">
        <title>The status, quality, and expansion of the NIH full-length cDNA project: the Mammalian Gene Collection (MGC).</title>
        <authorList>
            <consortium name="The MGC Project Team"/>
        </authorList>
    </citation>
    <scope>NUCLEOTIDE SEQUENCE [LARGE SCALE MRNA]</scope>
    <source>
        <tissue>Brain</tissue>
        <tissue>Kidney</tissue>
    </source>
</reference>
<reference key="4">
    <citation type="journal article" date="1972" name="Chem. Pharm. Bull.">
        <title>Comparative studies on angiotensins. II. Structure of rat angiotensin and its identification by DNS-method.</title>
        <authorList>
            <person name="Nakayama T."/>
            <person name="Nakajima T."/>
            <person name="Sokabe H."/>
        </authorList>
    </citation>
    <scope>PROTEIN SEQUENCE OF 25-34</scope>
</reference>
<reference key="5">
    <citation type="journal article" date="1998" name="Mol. Med.">
        <title>Molecular characterization of a dual endothelin-1/Angiotensin II receptor.</title>
        <authorList>
            <person name="Ruiz-Opazo N."/>
            <person name="Hirayama K."/>
            <person name="Akimoto K."/>
            <person name="Herrera V.L."/>
        </authorList>
    </citation>
    <scope>FUNCTION</scope>
    <source>
        <strain>Sprague-Dawley</strain>
    </source>
</reference>
<reference key="6">
    <citation type="journal article" date="2008" name="Mol. Med.">
        <title>The antithrombotic effect of angiotensin-(1-7) involves mas-mediated NO release from platelets.</title>
        <authorList>
            <person name="Fraga-Silva R.A."/>
            <person name="Pinheiro S.V.B."/>
            <person name="Goncalves A.C."/>
            <person name="Alenina N."/>
            <person name="Bader M."/>
            <person name="Santos R.A.S."/>
        </authorList>
    </citation>
    <scope>FUNCTION OF ANGIOTENSIN 1-7</scope>
</reference>
<reference key="7">
    <citation type="journal article" date="2010" name="Nature">
        <title>A redox switch in angiotensinogen modulates angiotensin release.</title>
        <authorList>
            <person name="Zhou A."/>
            <person name="Carrell R.W."/>
            <person name="Murphy M.P."/>
            <person name="Wei Z."/>
            <person name="Yan Y."/>
            <person name="Stanley P.L."/>
            <person name="Stein P.E."/>
            <person name="Broughton Pipkin F."/>
            <person name="Read R.J."/>
        </authorList>
    </citation>
    <scope>X-RAY CRYSTALLOGRAPHY (2.8 ANGSTROMS) OF 25-477</scope>
    <scope>DISULFIDE BOND</scope>
</reference>
<keyword id="KW-0002">3D-structure</keyword>
<keyword id="KW-0903">Direct protein sequencing</keyword>
<keyword id="KW-1015">Disulfide bond</keyword>
<keyword id="KW-0325">Glycoprotein</keyword>
<keyword id="KW-1185">Reference proteome</keyword>
<keyword id="KW-0964">Secreted</keyword>
<keyword id="KW-0732">Signal</keyword>
<keyword id="KW-0838">Vasoactive</keyword>
<keyword id="KW-0839">Vasoconstrictor</keyword>
<gene>
    <name type="primary">Agt</name>
    <name type="synonym">Serpina8</name>
</gene>